<reference key="1">
    <citation type="submission" date="2008-04" db="EMBL/GenBank/DDBJ databases">
        <title>Complete sequence of Yersinia pseudotuberculosis PB1/+.</title>
        <authorList>
            <person name="Copeland A."/>
            <person name="Lucas S."/>
            <person name="Lapidus A."/>
            <person name="Glavina del Rio T."/>
            <person name="Dalin E."/>
            <person name="Tice H."/>
            <person name="Bruce D."/>
            <person name="Goodwin L."/>
            <person name="Pitluck S."/>
            <person name="Munk A.C."/>
            <person name="Brettin T."/>
            <person name="Detter J.C."/>
            <person name="Han C."/>
            <person name="Tapia R."/>
            <person name="Schmutz J."/>
            <person name="Larimer F."/>
            <person name="Land M."/>
            <person name="Hauser L."/>
            <person name="Challacombe J.F."/>
            <person name="Green L."/>
            <person name="Lindler L.E."/>
            <person name="Nikolich M.P."/>
            <person name="Richardson P."/>
        </authorList>
    </citation>
    <scope>NUCLEOTIDE SEQUENCE [LARGE SCALE GENOMIC DNA]</scope>
    <source>
        <strain>PB1/+</strain>
    </source>
</reference>
<sequence length="315" mass="34140">MSDSLRIIFAGTPDFAARHLGALLSSQHKIVGVFTQPDRPAGRGNKLTPSPVKILAEHHGIPVFQPKSLRPEENQHLVADLNADIMVVVAYGLILPAAVLAMPRLGCINVHGSLLPRWRGAAPIQRSVWAGDEKTGITIMQMDIGLDTGAMLHKIECAIQPEDTSATLYDKLAQLGPQGLLITLQQLAAGTALAEVQNETQATYAEKLSKEEAKLDWTLSATQLERCIRAFNPWPVSYFIVDEQPIKVWQAQVLPAGEDAEPGTIIHADKHGIQVATADGVLNITQLQPAGKKAMSAADLLNSRREWFIPGSQLV</sequence>
<gene>
    <name evidence="1" type="primary">fmt</name>
    <name type="ordered locus">YPTS_3858</name>
</gene>
<keyword id="KW-0648">Protein biosynthesis</keyword>
<keyword id="KW-0808">Transferase</keyword>
<dbReference type="EC" id="2.1.2.9" evidence="1"/>
<dbReference type="EMBL" id="CP001048">
    <property type="protein sequence ID" value="ACC90807.1"/>
    <property type="molecule type" value="Genomic_DNA"/>
</dbReference>
<dbReference type="RefSeq" id="WP_002209020.1">
    <property type="nucleotide sequence ID" value="NZ_CP009780.1"/>
</dbReference>
<dbReference type="SMR" id="B2K505"/>
<dbReference type="GeneID" id="57974363"/>
<dbReference type="KEGG" id="ypb:YPTS_3858"/>
<dbReference type="PATRIC" id="fig|502801.10.peg.3323"/>
<dbReference type="GO" id="GO:0005829">
    <property type="term" value="C:cytosol"/>
    <property type="evidence" value="ECO:0007669"/>
    <property type="project" value="TreeGrafter"/>
</dbReference>
<dbReference type="GO" id="GO:0004479">
    <property type="term" value="F:methionyl-tRNA formyltransferase activity"/>
    <property type="evidence" value="ECO:0007669"/>
    <property type="project" value="UniProtKB-UniRule"/>
</dbReference>
<dbReference type="CDD" id="cd08646">
    <property type="entry name" value="FMT_core_Met-tRNA-FMT_N"/>
    <property type="match status" value="1"/>
</dbReference>
<dbReference type="CDD" id="cd08704">
    <property type="entry name" value="Met_tRNA_FMT_C"/>
    <property type="match status" value="1"/>
</dbReference>
<dbReference type="FunFam" id="3.10.25.10:FF:000001">
    <property type="entry name" value="Methionyl-tRNA formyltransferase"/>
    <property type="match status" value="1"/>
</dbReference>
<dbReference type="FunFam" id="3.40.50.12230:FF:000001">
    <property type="entry name" value="Methionyl-tRNA formyltransferase"/>
    <property type="match status" value="1"/>
</dbReference>
<dbReference type="FunFam" id="3.40.50.170:FF:000003">
    <property type="entry name" value="Methionyl-tRNA formyltransferase"/>
    <property type="match status" value="1"/>
</dbReference>
<dbReference type="Gene3D" id="3.10.25.10">
    <property type="entry name" value="Formyl transferase, C-terminal domain"/>
    <property type="match status" value="1"/>
</dbReference>
<dbReference type="Gene3D" id="3.40.50.170">
    <property type="entry name" value="Formyl transferase, N-terminal domain"/>
    <property type="match status" value="1"/>
</dbReference>
<dbReference type="HAMAP" id="MF_00182">
    <property type="entry name" value="Formyl_trans"/>
    <property type="match status" value="1"/>
</dbReference>
<dbReference type="InterPro" id="IPR005794">
    <property type="entry name" value="Fmt"/>
</dbReference>
<dbReference type="InterPro" id="IPR005793">
    <property type="entry name" value="Formyl_trans_C"/>
</dbReference>
<dbReference type="InterPro" id="IPR037022">
    <property type="entry name" value="Formyl_trans_C_sf"/>
</dbReference>
<dbReference type="InterPro" id="IPR002376">
    <property type="entry name" value="Formyl_transf_N"/>
</dbReference>
<dbReference type="InterPro" id="IPR036477">
    <property type="entry name" value="Formyl_transf_N_sf"/>
</dbReference>
<dbReference type="InterPro" id="IPR011034">
    <property type="entry name" value="Formyl_transferase-like_C_sf"/>
</dbReference>
<dbReference type="InterPro" id="IPR001555">
    <property type="entry name" value="GART_AS"/>
</dbReference>
<dbReference type="InterPro" id="IPR044135">
    <property type="entry name" value="Met-tRNA-FMT_C"/>
</dbReference>
<dbReference type="InterPro" id="IPR041711">
    <property type="entry name" value="Met-tRNA-FMT_N"/>
</dbReference>
<dbReference type="NCBIfam" id="TIGR00460">
    <property type="entry name" value="fmt"/>
    <property type="match status" value="1"/>
</dbReference>
<dbReference type="PANTHER" id="PTHR11138">
    <property type="entry name" value="METHIONYL-TRNA FORMYLTRANSFERASE"/>
    <property type="match status" value="1"/>
</dbReference>
<dbReference type="PANTHER" id="PTHR11138:SF5">
    <property type="entry name" value="METHIONYL-TRNA FORMYLTRANSFERASE, MITOCHONDRIAL"/>
    <property type="match status" value="1"/>
</dbReference>
<dbReference type="Pfam" id="PF02911">
    <property type="entry name" value="Formyl_trans_C"/>
    <property type="match status" value="1"/>
</dbReference>
<dbReference type="Pfam" id="PF00551">
    <property type="entry name" value="Formyl_trans_N"/>
    <property type="match status" value="1"/>
</dbReference>
<dbReference type="SUPFAM" id="SSF50486">
    <property type="entry name" value="FMT C-terminal domain-like"/>
    <property type="match status" value="1"/>
</dbReference>
<dbReference type="SUPFAM" id="SSF53328">
    <property type="entry name" value="Formyltransferase"/>
    <property type="match status" value="1"/>
</dbReference>
<dbReference type="PROSITE" id="PS00373">
    <property type="entry name" value="GART"/>
    <property type="match status" value="1"/>
</dbReference>
<comment type="function">
    <text evidence="1">Attaches a formyl group to the free amino group of methionyl-tRNA(fMet). The formyl group appears to play a dual role in the initiator identity of N-formylmethionyl-tRNA by promoting its recognition by IF2 and preventing the misappropriation of this tRNA by the elongation apparatus.</text>
</comment>
<comment type="catalytic activity">
    <reaction evidence="1">
        <text>L-methionyl-tRNA(fMet) + (6R)-10-formyltetrahydrofolate = N-formyl-L-methionyl-tRNA(fMet) + (6S)-5,6,7,8-tetrahydrofolate + H(+)</text>
        <dbReference type="Rhea" id="RHEA:24380"/>
        <dbReference type="Rhea" id="RHEA-COMP:9952"/>
        <dbReference type="Rhea" id="RHEA-COMP:9953"/>
        <dbReference type="ChEBI" id="CHEBI:15378"/>
        <dbReference type="ChEBI" id="CHEBI:57453"/>
        <dbReference type="ChEBI" id="CHEBI:78530"/>
        <dbReference type="ChEBI" id="CHEBI:78844"/>
        <dbReference type="ChEBI" id="CHEBI:195366"/>
        <dbReference type="EC" id="2.1.2.9"/>
    </reaction>
</comment>
<comment type="similarity">
    <text evidence="1">Belongs to the Fmt family.</text>
</comment>
<evidence type="ECO:0000255" key="1">
    <source>
        <dbReference type="HAMAP-Rule" id="MF_00182"/>
    </source>
</evidence>
<proteinExistence type="inferred from homology"/>
<feature type="chain" id="PRO_1000098464" description="Methionyl-tRNA formyltransferase">
    <location>
        <begin position="1"/>
        <end position="315"/>
    </location>
</feature>
<feature type="binding site" evidence="1">
    <location>
        <begin position="113"/>
        <end position="116"/>
    </location>
    <ligand>
        <name>(6S)-5,6,7,8-tetrahydrofolate</name>
        <dbReference type="ChEBI" id="CHEBI:57453"/>
    </ligand>
</feature>
<accession>B2K505</accession>
<name>FMT_YERPB</name>
<protein>
    <recommendedName>
        <fullName evidence="1">Methionyl-tRNA formyltransferase</fullName>
        <ecNumber evidence="1">2.1.2.9</ecNumber>
    </recommendedName>
</protein>
<organism>
    <name type="scientific">Yersinia pseudotuberculosis serotype IB (strain PB1/+)</name>
    <dbReference type="NCBI Taxonomy" id="502801"/>
    <lineage>
        <taxon>Bacteria</taxon>
        <taxon>Pseudomonadati</taxon>
        <taxon>Pseudomonadota</taxon>
        <taxon>Gammaproteobacteria</taxon>
        <taxon>Enterobacterales</taxon>
        <taxon>Yersiniaceae</taxon>
        <taxon>Yersinia</taxon>
    </lineage>
</organism>